<evidence type="ECO:0000255" key="1">
    <source>
        <dbReference type="PROSITE-ProRule" id="PRU00159"/>
    </source>
</evidence>
<evidence type="ECO:0000256" key="2">
    <source>
        <dbReference type="SAM" id="MobiDB-lite"/>
    </source>
</evidence>
<comment type="domain">
    <text>The protein kinase domain is predicted to be catalytically inactive.</text>
</comment>
<name>Y0124_DICDI</name>
<sequence length="1936" mass="213056">MSLKGSLKLPAAPKDKVRNITKFPVLVEGEVVTNYAQKDVRPIFQKLSYPVFIDLSEGIYLLEKLNLSSNSLIEVTSLGHLNKLKRLILNRNNLIEYSVQGLSSLVYLGLCNNRIDRITDMSDCKKLINIDLSGNRLTCGDGFDHFSKLKSLKVLDLSSNSINCSLIDFQKKILEPLKKSKTLEYLSFENNLIEKKYEEFRLFVINELPKLKYLNWVLISKDERTKASKLDSEGFFSKQLSILSVTPVVHNNNNPNNTVTSAQSSPSLSSVSTPIPTPLNTSSNNIGGGGSGTTTSVSVGSSPTIRGMPSSPNSRSTSFIQRKPSVGANMMPKLNSSLNRSTDFLGKERENHQSTSPSSSSLSISSSSQNNNSNHHHHHPKSIDETPEVLSPFDILQSKVNAENCLSSSQQDLIVNHNNLTTASQILQEIKPTKELTKQETEDYIDILLNELQPNNTDFPTFASVIDQKVYLDLLYRAIIEDAIPEELIEECNKSTTTAATAAAVVDFVTPQLTSLSSSSSSSSTTPPQPQLPPPPPQQQQLDLSLPLPPVNIINMPMDDDELISVPTDESELPVVSTIVPSLVKESSRESLLVTTIDNSTLSTTPPLSSTTPPSPSPKLPTLEETIESVVTAKPSSTTTTATQTNKVSGGSAKEIWTKIDQNTATTPSTPSKNLPKRLPSQSNLINNNNNNNVINVPPPTQSILKPVVGGGSGSTPSSPQMKPMAKPIAKIPAVSTTTNTTPTSTPGSPSKPIMKPVIKKVPAISLKQDQPPIVSPPQPQPQPPIVQQKQQQQQQQQQQQQPQQHFKSEIDKALADIDSWGVIPTAPQAEIKKPIIPQELLSNIQKVESPTEMVENATSKLDEMIMEYHNTSPTSSPTNTRKSITPVQQQQPIQQPIQQPIQQPIQQPIQQPIQQQQQPPIQQIDQVQRMINNETNRIGSMMILGQNISLPNWIVPHDQIQVGSRLGLGSFGDCYTGNAFSIPTILKKLRTQRFTDQFLGQFKNEVMQIRELQHENLVPVSGCCLDNNIYIVHPYYDASNLQTLLFEQSHNNNNNNNNNNNNNNNNNNNNNNNNNHTIISNEFIHRVSLGISKAMTYLHSHDVVHRALKLNNILIDRVSGNVLVRDYGFNFVKDGIFRTGQQSSPYLAPELFNSNCNQYDTNSDQFGFAMILLQLFTRSPLFQDIHVSRITDTILNGVRPEIPDNVPSVFSRLIKACWSADSSARPSFLTISKILSQPFQRIFALSPSTTITKPIVSTGNTTIDSSSSSSGSGSSSVVGSVNSTTIPPVNNSNTGSTGSTSATVKHQFSETGELNRKMILVLERIVSMLSTAAASASTSTISTDSIDSIKRALKALENLSSPENHSSMVGIGLMRSLCFIGTIHLAEIDEQLLRVIYSLSTNEQLSNEFILAGGFTPLSQWVSSSSSSSTSANISLLAIKLLTVLADEQHLHHVRLTGILSSLTQQFVNYTSNNQNGGGGSGGGVINETIILQSVGAMSRILLNQDNQNQFIEEGGVSSLLKMLLNSGNSLSMRALLALCCLISNQNCKSQLHNAGIIPKLMELLSSPQKLLRLHSLKVIETMSKDIEFRKLLIQDNCLSLLVNLLLNSYNGTNTGIGNNTTGNNNDSQESICSILSCIGSLLKNQIALESFYQSNGVDVLIKLIGYNQQIEILESLFPVYCLLINHEQSRLKLVPTINQLVEILSNSTLKESIIISILKCLTLFSSHSSCIEFIEQSMSVSIVSTLLIRNENNYEIKIHSLRFVSSLAKVNNKLAVNIHMMGILQTLVNNLYDKNSMIKDEAISTISWLVSSQECRSIFLQKNVLPMLFDFLSTRNVDIMERLIWAISFFALDDSAQSLMRDNQQCIQFIVNCLDRHEEVFKTLSIKTILILSQKQINHQALKRVGVDFQLQVLSSSSNRSIQLASKKILSLLS</sequence>
<reference key="1">
    <citation type="journal article" date="2005" name="Nature">
        <title>The genome of the social amoeba Dictyostelium discoideum.</title>
        <authorList>
            <person name="Eichinger L."/>
            <person name="Pachebat J.A."/>
            <person name="Gloeckner G."/>
            <person name="Rajandream M.A."/>
            <person name="Sucgang R."/>
            <person name="Berriman M."/>
            <person name="Song J."/>
            <person name="Olsen R."/>
            <person name="Szafranski K."/>
            <person name="Xu Q."/>
            <person name="Tunggal B."/>
            <person name="Kummerfeld S."/>
            <person name="Madera M."/>
            <person name="Konfortov B.A."/>
            <person name="Rivero F."/>
            <person name="Bankier A.T."/>
            <person name="Lehmann R."/>
            <person name="Hamlin N."/>
            <person name="Davies R."/>
            <person name="Gaudet P."/>
            <person name="Fey P."/>
            <person name="Pilcher K."/>
            <person name="Chen G."/>
            <person name="Saunders D."/>
            <person name="Sodergren E.J."/>
            <person name="Davis P."/>
            <person name="Kerhornou A."/>
            <person name="Nie X."/>
            <person name="Hall N."/>
            <person name="Anjard C."/>
            <person name="Hemphill L."/>
            <person name="Bason N."/>
            <person name="Farbrother P."/>
            <person name="Desany B."/>
            <person name="Just E."/>
            <person name="Morio T."/>
            <person name="Rost R."/>
            <person name="Churcher C.M."/>
            <person name="Cooper J."/>
            <person name="Haydock S."/>
            <person name="van Driessche N."/>
            <person name="Cronin A."/>
            <person name="Goodhead I."/>
            <person name="Muzny D.M."/>
            <person name="Mourier T."/>
            <person name="Pain A."/>
            <person name="Lu M."/>
            <person name="Harper D."/>
            <person name="Lindsay R."/>
            <person name="Hauser H."/>
            <person name="James K.D."/>
            <person name="Quiles M."/>
            <person name="Madan Babu M."/>
            <person name="Saito T."/>
            <person name="Buchrieser C."/>
            <person name="Wardroper A."/>
            <person name="Felder M."/>
            <person name="Thangavelu M."/>
            <person name="Johnson D."/>
            <person name="Knights A."/>
            <person name="Loulseged H."/>
            <person name="Mungall K.L."/>
            <person name="Oliver K."/>
            <person name="Price C."/>
            <person name="Quail M.A."/>
            <person name="Urushihara H."/>
            <person name="Hernandez J."/>
            <person name="Rabbinowitsch E."/>
            <person name="Steffen D."/>
            <person name="Sanders M."/>
            <person name="Ma J."/>
            <person name="Kohara Y."/>
            <person name="Sharp S."/>
            <person name="Simmonds M.N."/>
            <person name="Spiegler S."/>
            <person name="Tivey A."/>
            <person name="Sugano S."/>
            <person name="White B."/>
            <person name="Walker D."/>
            <person name="Woodward J.R."/>
            <person name="Winckler T."/>
            <person name="Tanaka Y."/>
            <person name="Shaulsky G."/>
            <person name="Schleicher M."/>
            <person name="Weinstock G.M."/>
            <person name="Rosenthal A."/>
            <person name="Cox E.C."/>
            <person name="Chisholm R.L."/>
            <person name="Gibbs R.A."/>
            <person name="Loomis W.F."/>
            <person name="Platzer M."/>
            <person name="Kay R.R."/>
            <person name="Williams J.G."/>
            <person name="Dear P.H."/>
            <person name="Noegel A.A."/>
            <person name="Barrell B.G."/>
            <person name="Kuspa A."/>
        </authorList>
    </citation>
    <scope>NUCLEOTIDE SEQUENCE [LARGE SCALE GENOMIC DNA]</scope>
    <source>
        <strain>AX4</strain>
    </source>
</reference>
<keyword id="KW-0067">ATP-binding</keyword>
<keyword id="KW-0433">Leucine-rich repeat</keyword>
<keyword id="KW-0547">Nucleotide-binding</keyword>
<keyword id="KW-1185">Reference proteome</keyword>
<keyword id="KW-0677">Repeat</keyword>
<accession>Q54XI9</accession>
<gene>
    <name type="ORF">DDB_G0278909</name>
</gene>
<proteinExistence type="predicted"/>
<protein>
    <recommendedName>
        <fullName>Probable inactive serine/threonine-protein kinase DDB_G0278909</fullName>
    </recommendedName>
</protein>
<organism>
    <name type="scientific">Dictyostelium discoideum</name>
    <name type="common">Social amoeba</name>
    <dbReference type="NCBI Taxonomy" id="44689"/>
    <lineage>
        <taxon>Eukaryota</taxon>
        <taxon>Amoebozoa</taxon>
        <taxon>Evosea</taxon>
        <taxon>Eumycetozoa</taxon>
        <taxon>Dictyostelia</taxon>
        <taxon>Dictyosteliales</taxon>
        <taxon>Dictyosteliaceae</taxon>
        <taxon>Dictyostelium</taxon>
    </lineage>
</organism>
<feature type="chain" id="PRO_0000355172" description="Probable inactive serine/threonine-protein kinase DDB_G0278909">
    <location>
        <begin position="1"/>
        <end position="1936"/>
    </location>
</feature>
<feature type="repeat" description="LRR 1">
    <location>
        <begin position="61"/>
        <end position="82"/>
    </location>
</feature>
<feature type="repeat" description="LRR 2">
    <location>
        <begin position="83"/>
        <end position="103"/>
    </location>
</feature>
<feature type="repeat" description="LRR 3">
    <location>
        <begin position="104"/>
        <end position="125"/>
    </location>
</feature>
<feature type="repeat" description="LRR 4">
    <location>
        <begin position="126"/>
        <end position="147"/>
    </location>
</feature>
<feature type="repeat" description="LRR 5">
    <location>
        <begin position="151"/>
        <end position="173"/>
    </location>
</feature>
<feature type="domain" description="LRRCT">
    <location>
        <begin position="191"/>
        <end position="230"/>
    </location>
</feature>
<feature type="repeat" description="HEAT 1">
    <location>
        <begin position="325"/>
        <end position="368"/>
    </location>
</feature>
<feature type="repeat" description="HEAT 2">
    <location>
        <begin position="439"/>
        <end position="476"/>
    </location>
</feature>
<feature type="repeat" description="HEAT 3">
    <location>
        <begin position="574"/>
        <end position="614"/>
    </location>
</feature>
<feature type="repeat" description="HEAT 4">
    <location>
        <begin position="617"/>
        <end position="654"/>
    </location>
</feature>
<feature type="domain" description="Protein kinase" evidence="1">
    <location>
        <begin position="961"/>
        <end position="1241"/>
    </location>
</feature>
<feature type="repeat" description="HEAT 5">
    <location>
        <begin position="1317"/>
        <end position="1356"/>
    </location>
</feature>
<feature type="repeat" description="HEAT 6">
    <location>
        <begin position="1512"/>
        <end position="1549"/>
    </location>
</feature>
<feature type="repeat" description="HEAT 7">
    <location>
        <begin position="1553"/>
        <end position="1590"/>
    </location>
</feature>
<feature type="repeat" description="HEAT 8">
    <location>
        <begin position="1598"/>
        <end position="1635"/>
    </location>
</feature>
<feature type="repeat" description="HEAT 9">
    <location>
        <begin position="1690"/>
        <end position="1728"/>
    </location>
</feature>
<feature type="repeat" description="HEAT 10">
    <location>
        <begin position="1739"/>
        <end position="1775"/>
    </location>
</feature>
<feature type="repeat" description="HEAT 11">
    <location>
        <begin position="1780"/>
        <end position="1817"/>
    </location>
</feature>
<feature type="repeat" description="HEAT 12">
    <location>
        <begin position="1821"/>
        <end position="1858"/>
    </location>
</feature>
<feature type="repeat" description="HEAT 13">
    <location>
        <begin position="1863"/>
        <end position="1900"/>
    </location>
</feature>
<feature type="region of interest" description="Disordered" evidence="2">
    <location>
        <begin position="253"/>
        <end position="319"/>
    </location>
</feature>
<feature type="region of interest" description="Disordered" evidence="2">
    <location>
        <begin position="347"/>
        <end position="386"/>
    </location>
</feature>
<feature type="region of interest" description="Disordered" evidence="2">
    <location>
        <begin position="516"/>
        <end position="544"/>
    </location>
</feature>
<feature type="region of interest" description="Disordered" evidence="2">
    <location>
        <begin position="599"/>
        <end position="620"/>
    </location>
</feature>
<feature type="region of interest" description="Disordered" evidence="2">
    <location>
        <begin position="660"/>
        <end position="689"/>
    </location>
</feature>
<feature type="region of interest" description="Disordered" evidence="2">
    <location>
        <begin position="702"/>
        <end position="756"/>
    </location>
</feature>
<feature type="region of interest" description="Disordered" evidence="2">
    <location>
        <begin position="769"/>
        <end position="809"/>
    </location>
</feature>
<feature type="region of interest" description="Disordered" evidence="2">
    <location>
        <begin position="1050"/>
        <end position="1075"/>
    </location>
</feature>
<feature type="region of interest" description="Disordered" evidence="2">
    <location>
        <begin position="1261"/>
        <end position="1308"/>
    </location>
</feature>
<feature type="compositionally biased region" description="Low complexity" evidence="2">
    <location>
        <begin position="253"/>
        <end position="285"/>
    </location>
</feature>
<feature type="compositionally biased region" description="Low complexity" evidence="2">
    <location>
        <begin position="293"/>
        <end position="302"/>
    </location>
</feature>
<feature type="compositionally biased region" description="Polar residues" evidence="2">
    <location>
        <begin position="310"/>
        <end position="319"/>
    </location>
</feature>
<feature type="compositionally biased region" description="Low complexity" evidence="2">
    <location>
        <begin position="353"/>
        <end position="373"/>
    </location>
</feature>
<feature type="compositionally biased region" description="Low complexity" evidence="2">
    <location>
        <begin position="516"/>
        <end position="526"/>
    </location>
</feature>
<feature type="compositionally biased region" description="Pro residues" evidence="2">
    <location>
        <begin position="527"/>
        <end position="538"/>
    </location>
</feature>
<feature type="compositionally biased region" description="Low complexity" evidence="2">
    <location>
        <begin position="600"/>
        <end position="612"/>
    </location>
</feature>
<feature type="compositionally biased region" description="Polar residues" evidence="2">
    <location>
        <begin position="660"/>
        <end position="673"/>
    </location>
</feature>
<feature type="compositionally biased region" description="Low complexity" evidence="2">
    <location>
        <begin position="736"/>
        <end position="756"/>
    </location>
</feature>
<feature type="compositionally biased region" description="Pro residues" evidence="2">
    <location>
        <begin position="774"/>
        <end position="785"/>
    </location>
</feature>
<feature type="compositionally biased region" description="Low complexity" evidence="2">
    <location>
        <begin position="786"/>
        <end position="805"/>
    </location>
</feature>
<feature type="compositionally biased region" description="Low complexity" evidence="2">
    <location>
        <begin position="1052"/>
        <end position="1075"/>
    </location>
</feature>
<feature type="compositionally biased region" description="Low complexity" evidence="2">
    <location>
        <begin position="1266"/>
        <end position="1282"/>
    </location>
</feature>
<feature type="compositionally biased region" description="Low complexity" evidence="2">
    <location>
        <begin position="1291"/>
        <end position="1302"/>
    </location>
</feature>
<feature type="binding site" evidence="1">
    <location>
        <begin position="967"/>
        <end position="975"/>
    </location>
    <ligand>
        <name>ATP</name>
        <dbReference type="ChEBI" id="CHEBI:30616"/>
    </ligand>
</feature>
<feature type="binding site" evidence="1">
    <location>
        <position position="988"/>
    </location>
    <ligand>
        <name>ATP</name>
        <dbReference type="ChEBI" id="CHEBI:30616"/>
    </ligand>
</feature>
<dbReference type="EMBL" id="AAFI02000024">
    <property type="protein sequence ID" value="EAL68056.1"/>
    <property type="molecule type" value="Genomic_DNA"/>
</dbReference>
<dbReference type="RefSeq" id="XP_647814.1">
    <property type="nucleotide sequence ID" value="XM_642722.1"/>
</dbReference>
<dbReference type="SMR" id="Q54XI9"/>
<dbReference type="FunCoup" id="Q54XI9">
    <property type="interactions" value="43"/>
</dbReference>
<dbReference type="STRING" id="44689.Q54XI9"/>
<dbReference type="GlyGen" id="Q54XI9">
    <property type="glycosylation" value="4 sites"/>
</dbReference>
<dbReference type="PaxDb" id="44689-DDB0230124"/>
<dbReference type="EnsemblProtists" id="EAL68056">
    <property type="protein sequence ID" value="EAL68056"/>
    <property type="gene ID" value="DDB_G0278909"/>
</dbReference>
<dbReference type="GeneID" id="8621774"/>
<dbReference type="KEGG" id="ddi:DDB_G0278909"/>
<dbReference type="dictyBase" id="DDB_G0278909"/>
<dbReference type="VEuPathDB" id="AmoebaDB:DDB_G0278909"/>
<dbReference type="eggNOG" id="KOG0192">
    <property type="taxonomic scope" value="Eukaryota"/>
</dbReference>
<dbReference type="HOGENOM" id="CLU_235097_0_0_1"/>
<dbReference type="InParanoid" id="Q54XI9"/>
<dbReference type="OMA" id="HQFSETG"/>
<dbReference type="PRO" id="PR:Q54XI9"/>
<dbReference type="Proteomes" id="UP000002195">
    <property type="component" value="Chromosome 3"/>
</dbReference>
<dbReference type="GO" id="GO:0005737">
    <property type="term" value="C:cytoplasm"/>
    <property type="evidence" value="ECO:0000318"/>
    <property type="project" value="GO_Central"/>
</dbReference>
<dbReference type="GO" id="GO:0005524">
    <property type="term" value="F:ATP binding"/>
    <property type="evidence" value="ECO:0007669"/>
    <property type="project" value="UniProtKB-KW"/>
</dbReference>
<dbReference type="GO" id="GO:0004672">
    <property type="term" value="F:protein kinase activity"/>
    <property type="evidence" value="ECO:0000318"/>
    <property type="project" value="GO_Central"/>
</dbReference>
<dbReference type="GO" id="GO:0007165">
    <property type="term" value="P:signal transduction"/>
    <property type="evidence" value="ECO:0000318"/>
    <property type="project" value="GO_Central"/>
</dbReference>
<dbReference type="Gene3D" id="1.25.10.10">
    <property type="entry name" value="Leucine-rich Repeat Variant"/>
    <property type="match status" value="2"/>
</dbReference>
<dbReference type="Gene3D" id="3.30.200.20">
    <property type="entry name" value="Phosphorylase Kinase, domain 1"/>
    <property type="match status" value="1"/>
</dbReference>
<dbReference type="Gene3D" id="3.80.10.10">
    <property type="entry name" value="Ribonuclease Inhibitor"/>
    <property type="match status" value="2"/>
</dbReference>
<dbReference type="Gene3D" id="1.10.510.10">
    <property type="entry name" value="Transferase(Phosphotransferase) domain 1"/>
    <property type="match status" value="1"/>
</dbReference>
<dbReference type="InterPro" id="IPR011989">
    <property type="entry name" value="ARM-like"/>
</dbReference>
<dbReference type="InterPro" id="IPR016024">
    <property type="entry name" value="ARM-type_fold"/>
</dbReference>
<dbReference type="InterPro" id="IPR000225">
    <property type="entry name" value="Armadillo"/>
</dbReference>
<dbReference type="InterPro" id="IPR011009">
    <property type="entry name" value="Kinase-like_dom_sf"/>
</dbReference>
<dbReference type="InterPro" id="IPR001611">
    <property type="entry name" value="Leu-rich_rpt"/>
</dbReference>
<dbReference type="InterPro" id="IPR032675">
    <property type="entry name" value="LRR_dom_sf"/>
</dbReference>
<dbReference type="InterPro" id="IPR000719">
    <property type="entry name" value="Prot_kinase_dom"/>
</dbReference>
<dbReference type="InterPro" id="IPR017441">
    <property type="entry name" value="Protein_kinase_ATP_BS"/>
</dbReference>
<dbReference type="InterPro" id="IPR001245">
    <property type="entry name" value="Ser-Thr/Tyr_kinase_cat_dom"/>
</dbReference>
<dbReference type="InterPro" id="IPR051681">
    <property type="entry name" value="Ser/Thr_Kinases-Pseudokinases"/>
</dbReference>
<dbReference type="PANTHER" id="PTHR44329">
    <property type="entry name" value="SERINE/THREONINE-PROTEIN KINASE TNNI3K-RELATED"/>
    <property type="match status" value="1"/>
</dbReference>
<dbReference type="Pfam" id="PF07714">
    <property type="entry name" value="PK_Tyr_Ser-Thr"/>
    <property type="match status" value="1"/>
</dbReference>
<dbReference type="SMART" id="SM00185">
    <property type="entry name" value="ARM"/>
    <property type="match status" value="7"/>
</dbReference>
<dbReference type="SMART" id="SM00365">
    <property type="entry name" value="LRR_SD22"/>
    <property type="match status" value="3"/>
</dbReference>
<dbReference type="SUPFAM" id="SSF48371">
    <property type="entry name" value="ARM repeat"/>
    <property type="match status" value="2"/>
</dbReference>
<dbReference type="SUPFAM" id="SSF52075">
    <property type="entry name" value="Outer arm dynein light chain 1"/>
    <property type="match status" value="1"/>
</dbReference>
<dbReference type="SUPFAM" id="SSF56112">
    <property type="entry name" value="Protein kinase-like (PK-like)"/>
    <property type="match status" value="1"/>
</dbReference>
<dbReference type="PROSITE" id="PS51450">
    <property type="entry name" value="LRR"/>
    <property type="match status" value="5"/>
</dbReference>
<dbReference type="PROSITE" id="PS00107">
    <property type="entry name" value="PROTEIN_KINASE_ATP"/>
    <property type="match status" value="1"/>
</dbReference>
<dbReference type="PROSITE" id="PS50011">
    <property type="entry name" value="PROTEIN_KINASE_DOM"/>
    <property type="match status" value="1"/>
</dbReference>